<keyword id="KW-0217">Developmental protein</keyword>
<keyword id="KW-0221">Differentiation</keyword>
<keyword id="KW-1185">Reference proteome</keyword>
<keyword id="KW-0964">Secreted</keyword>
<keyword id="KW-0732">Signal</keyword>
<dbReference type="EMBL" id="AB455108">
    <property type="protein sequence ID" value="BAI45200.1"/>
    <property type="molecule type" value="mRNA"/>
</dbReference>
<dbReference type="EMBL" id="AB455110">
    <property type="protein sequence ID" value="BAI45202.1"/>
    <property type="molecule type" value="mRNA"/>
</dbReference>
<dbReference type="EMBL" id="AB455122">
    <property type="protein sequence ID" value="BAI45214.1"/>
    <property type="molecule type" value="mRNA"/>
</dbReference>
<dbReference type="EMBL" id="CM000127">
    <property type="protein sequence ID" value="EAY85622.1"/>
    <property type="molecule type" value="Genomic_DNA"/>
</dbReference>
<dbReference type="STRING" id="39946.A2X462"/>
<dbReference type="EnsemblPlants" id="BGIOSGA008089-TA">
    <property type="protein sequence ID" value="BGIOSGA008089-PA"/>
    <property type="gene ID" value="BGIOSGA008089"/>
</dbReference>
<dbReference type="EnsemblPlants" id="OsGoSa_02g0015060.01">
    <property type="protein sequence ID" value="OsGoSa_02g0015060.01"/>
    <property type="gene ID" value="OsGoSa_02g0015060"/>
</dbReference>
<dbReference type="EnsemblPlants" id="OsIR64_02g0014440.01">
    <property type="protein sequence ID" value="OsIR64_02g0014440.01"/>
    <property type="gene ID" value="OsIR64_02g0014440"/>
</dbReference>
<dbReference type="EnsemblPlants" id="OsKYG_02g0014540.01">
    <property type="protein sequence ID" value="OsKYG_02g0014540.01"/>
    <property type="gene ID" value="OsKYG_02g0014540"/>
</dbReference>
<dbReference type="EnsemblPlants" id="OsLaMu_02g0014660.01">
    <property type="protein sequence ID" value="OsLaMu_02g0014660.01"/>
    <property type="gene ID" value="OsLaMu_02g0014660"/>
</dbReference>
<dbReference type="EnsemblPlants" id="OsLima_02g0014970.01">
    <property type="protein sequence ID" value="OsLima_02g0014970.01"/>
    <property type="gene ID" value="OsLima_02g0014970"/>
</dbReference>
<dbReference type="EnsemblPlants" id="OsLiXu_02g0014860.01">
    <property type="protein sequence ID" value="OsLiXu_02g0014860.01"/>
    <property type="gene ID" value="OsLiXu_02g0014860"/>
</dbReference>
<dbReference type="EnsemblPlants" id="OsMH63_02G015030_01">
    <property type="protein sequence ID" value="OsMH63_02G015030_01"/>
    <property type="gene ID" value="OsMH63_02G015030"/>
</dbReference>
<dbReference type="EnsemblPlants" id="OsPr106_02g0014610.01">
    <property type="protein sequence ID" value="OsPr106_02g0014610.01"/>
    <property type="gene ID" value="OsPr106_02g0014610"/>
</dbReference>
<dbReference type="EnsemblPlants" id="OsZS97_02G014520_01">
    <property type="protein sequence ID" value="OsZS97_02G014520_01"/>
    <property type="gene ID" value="OsZS97_02G014520"/>
</dbReference>
<dbReference type="Gramene" id="BGIOSGA008089-TA">
    <property type="protein sequence ID" value="BGIOSGA008089-PA"/>
    <property type="gene ID" value="BGIOSGA008089"/>
</dbReference>
<dbReference type="Gramene" id="OsGoSa_02g0015060.01">
    <property type="protein sequence ID" value="OsGoSa_02g0015060.01"/>
    <property type="gene ID" value="OsGoSa_02g0015060"/>
</dbReference>
<dbReference type="Gramene" id="OsIR64_02g0014440.01">
    <property type="protein sequence ID" value="OsIR64_02g0014440.01"/>
    <property type="gene ID" value="OsIR64_02g0014440"/>
</dbReference>
<dbReference type="Gramene" id="OsKYG_02g0014540.01">
    <property type="protein sequence ID" value="OsKYG_02g0014540.01"/>
    <property type="gene ID" value="OsKYG_02g0014540"/>
</dbReference>
<dbReference type="Gramene" id="OsLaMu_02g0014660.01">
    <property type="protein sequence ID" value="OsLaMu_02g0014660.01"/>
    <property type="gene ID" value="OsLaMu_02g0014660"/>
</dbReference>
<dbReference type="Gramene" id="OsLima_02g0014970.01">
    <property type="protein sequence ID" value="OsLima_02g0014970.01"/>
    <property type="gene ID" value="OsLima_02g0014970"/>
</dbReference>
<dbReference type="Gramene" id="OsLiXu_02g0014860.01">
    <property type="protein sequence ID" value="OsLiXu_02g0014860.01"/>
    <property type="gene ID" value="OsLiXu_02g0014860"/>
</dbReference>
<dbReference type="Gramene" id="OsMH63_02G015030_01">
    <property type="protein sequence ID" value="OsMH63_02G015030_01"/>
    <property type="gene ID" value="OsMH63_02G015030"/>
</dbReference>
<dbReference type="Gramene" id="OsPr106_02g0014610.01">
    <property type="protein sequence ID" value="OsPr106_02g0014610.01"/>
    <property type="gene ID" value="OsPr106_02g0014610"/>
</dbReference>
<dbReference type="Gramene" id="OsZS97_02G014520_01">
    <property type="protein sequence ID" value="OsZS97_02G014520_01"/>
    <property type="gene ID" value="OsZS97_02G014520"/>
</dbReference>
<dbReference type="HOGENOM" id="CLU_145048_1_0_1"/>
<dbReference type="OMA" id="AMIDPRY"/>
<dbReference type="OrthoDB" id="753861at2759"/>
<dbReference type="Proteomes" id="UP000007015">
    <property type="component" value="Chromosome 2"/>
</dbReference>
<dbReference type="GO" id="GO:0005576">
    <property type="term" value="C:extracellular region"/>
    <property type="evidence" value="ECO:0007669"/>
    <property type="project" value="UniProtKB-SubCell"/>
</dbReference>
<dbReference type="GO" id="GO:0030154">
    <property type="term" value="P:cell differentiation"/>
    <property type="evidence" value="ECO:0007669"/>
    <property type="project" value="UniProtKB-KW"/>
</dbReference>
<dbReference type="InterPro" id="IPR039618">
    <property type="entry name" value="CLE9-13"/>
</dbReference>
<dbReference type="PANTHER" id="PTHR34359">
    <property type="entry name" value="CLAVATA3/ESR (CLE)-RELATED PROTEIN 10"/>
    <property type="match status" value="1"/>
</dbReference>
<dbReference type="PANTHER" id="PTHR34359:SF24">
    <property type="entry name" value="INACTIVE PROTEIN FON2 SPARE1"/>
    <property type="match status" value="1"/>
</dbReference>
<proteinExistence type="evidence at transcript level"/>
<gene>
    <name type="primary">FOS1</name>
    <name type="synonym">CLE202</name>
    <name type="ORF">OsI_06995</name>
</gene>
<protein>
    <recommendedName>
        <fullName>Protein FON2 SPARE1</fullName>
    </recommendedName>
    <alternativeName>
        <fullName>CLAVATA3/ESR (CLE)-related protein 202</fullName>
        <shortName>OsCLE202</shortName>
    </alternativeName>
</protein>
<sequence>MSRRLGAAAAVLLLWLAVLTFAFHGYYGGRLGSARRRNILLQHPALALHLPTRKMLLAVASFDDASSPSSLTTTDRHHHHHRHHGHHHHRGHDRWNRKGVPPTAAGPGEEVDPRFGVQKRLVPTGPNPLHH</sequence>
<comment type="function">
    <text evidence="4">Involved in the maintenance of the floral meristem and of the shoot apical meristem in the vegetative phase. Suppresses the fon2 mutation and acts independently of FON1. In Oryza sativa subsp. japonica, the protein has a single amino acid substitution at the putative processing site of the signal peptide and is inactive.</text>
</comment>
<comment type="subcellular location">
    <subcellularLocation>
        <location evidence="1">Secreted</location>
    </subcellularLocation>
</comment>
<comment type="tissue specificity">
    <text evidence="4">Expressed in all aerial apical meristems, including the floral and inflorescence meristems in the reproductive phase and the shoot apical meristem in the vegetative phase. Also detected in the primordia of lateral organs such as the leaf and the floral organs.</text>
</comment>
<comment type="similarity">
    <text evidence="5">Belongs to the CLV3/ESR signal peptide family.</text>
</comment>
<organism>
    <name type="scientific">Oryza sativa subsp. indica</name>
    <name type="common">Rice</name>
    <dbReference type="NCBI Taxonomy" id="39946"/>
    <lineage>
        <taxon>Eukaryota</taxon>
        <taxon>Viridiplantae</taxon>
        <taxon>Streptophyta</taxon>
        <taxon>Embryophyta</taxon>
        <taxon>Tracheophyta</taxon>
        <taxon>Spermatophyta</taxon>
        <taxon>Magnoliopsida</taxon>
        <taxon>Liliopsida</taxon>
        <taxon>Poales</taxon>
        <taxon>Poaceae</taxon>
        <taxon>BOP clade</taxon>
        <taxon>Oryzoideae</taxon>
        <taxon>Oryzeae</taxon>
        <taxon>Oryzinae</taxon>
        <taxon>Oryza</taxon>
        <taxon>Oryza sativa</taxon>
    </lineage>
</organism>
<feature type="signal peptide" evidence="2">
    <location>
        <begin position="1"/>
        <end position="22"/>
    </location>
</feature>
<feature type="chain" id="PRO_0000422037" description="Protein FON2 SPARE1">
    <location>
        <begin position="23"/>
        <end position="131"/>
    </location>
</feature>
<feature type="region of interest" description="Disordered" evidence="3">
    <location>
        <begin position="67"/>
        <end position="131"/>
    </location>
</feature>
<feature type="compositionally biased region" description="Basic residues" evidence="3">
    <location>
        <begin position="76"/>
        <end position="97"/>
    </location>
</feature>
<evidence type="ECO:0000250" key="1"/>
<evidence type="ECO:0000255" key="2"/>
<evidence type="ECO:0000256" key="3">
    <source>
        <dbReference type="SAM" id="MobiDB-lite"/>
    </source>
</evidence>
<evidence type="ECO:0000269" key="4">
    <source>
    </source>
</evidence>
<evidence type="ECO:0000305" key="5"/>
<name>FOS1_ORYSI</name>
<accession>A2X462</accession>
<reference key="1">
    <citation type="journal article" date="2009" name="PLoS Genet.">
        <title>FON2 SPARE1 redundantly regulates floral meristem maintenance with FLORAL ORGAN NUMBER2 in rice.</title>
        <authorList>
            <person name="Suzaki T."/>
            <person name="Ohneda M."/>
            <person name="Toriba T."/>
            <person name="Yoshida A."/>
            <person name="Hirano H.Y."/>
        </authorList>
    </citation>
    <scope>NUCLEOTIDE SEQUENCE [MRNA]</scope>
    <scope>FUNCTION</scope>
    <scope>TISSUE SPECIFICITY</scope>
    <source>
        <strain>cv. Kasalath</strain>
    </source>
</reference>
<reference key="2">
    <citation type="journal article" date="2005" name="PLoS Biol.">
        <title>The genomes of Oryza sativa: a history of duplications.</title>
        <authorList>
            <person name="Yu J."/>
            <person name="Wang J."/>
            <person name="Lin W."/>
            <person name="Li S."/>
            <person name="Li H."/>
            <person name="Zhou J."/>
            <person name="Ni P."/>
            <person name="Dong W."/>
            <person name="Hu S."/>
            <person name="Zeng C."/>
            <person name="Zhang J."/>
            <person name="Zhang Y."/>
            <person name="Li R."/>
            <person name="Xu Z."/>
            <person name="Li S."/>
            <person name="Li X."/>
            <person name="Zheng H."/>
            <person name="Cong L."/>
            <person name="Lin L."/>
            <person name="Yin J."/>
            <person name="Geng J."/>
            <person name="Li G."/>
            <person name="Shi J."/>
            <person name="Liu J."/>
            <person name="Lv H."/>
            <person name="Li J."/>
            <person name="Wang J."/>
            <person name="Deng Y."/>
            <person name="Ran L."/>
            <person name="Shi X."/>
            <person name="Wang X."/>
            <person name="Wu Q."/>
            <person name="Li C."/>
            <person name="Ren X."/>
            <person name="Wang J."/>
            <person name="Wang X."/>
            <person name="Li D."/>
            <person name="Liu D."/>
            <person name="Zhang X."/>
            <person name="Ji Z."/>
            <person name="Zhao W."/>
            <person name="Sun Y."/>
            <person name="Zhang Z."/>
            <person name="Bao J."/>
            <person name="Han Y."/>
            <person name="Dong L."/>
            <person name="Ji J."/>
            <person name="Chen P."/>
            <person name="Wu S."/>
            <person name="Liu J."/>
            <person name="Xiao Y."/>
            <person name="Bu D."/>
            <person name="Tan J."/>
            <person name="Yang L."/>
            <person name="Ye C."/>
            <person name="Zhang J."/>
            <person name="Xu J."/>
            <person name="Zhou Y."/>
            <person name="Yu Y."/>
            <person name="Zhang B."/>
            <person name="Zhuang S."/>
            <person name="Wei H."/>
            <person name="Liu B."/>
            <person name="Lei M."/>
            <person name="Yu H."/>
            <person name="Li Y."/>
            <person name="Xu H."/>
            <person name="Wei S."/>
            <person name="He X."/>
            <person name="Fang L."/>
            <person name="Zhang Z."/>
            <person name="Zhang Y."/>
            <person name="Huang X."/>
            <person name="Su Z."/>
            <person name="Tong W."/>
            <person name="Li J."/>
            <person name="Tong Z."/>
            <person name="Li S."/>
            <person name="Ye J."/>
            <person name="Wang L."/>
            <person name="Fang L."/>
            <person name="Lei T."/>
            <person name="Chen C.-S."/>
            <person name="Chen H.-C."/>
            <person name="Xu Z."/>
            <person name="Li H."/>
            <person name="Huang H."/>
            <person name="Zhang F."/>
            <person name="Xu H."/>
            <person name="Li N."/>
            <person name="Zhao C."/>
            <person name="Li S."/>
            <person name="Dong L."/>
            <person name="Huang Y."/>
            <person name="Li L."/>
            <person name="Xi Y."/>
            <person name="Qi Q."/>
            <person name="Li W."/>
            <person name="Zhang B."/>
            <person name="Hu W."/>
            <person name="Zhang Y."/>
            <person name="Tian X."/>
            <person name="Jiao Y."/>
            <person name="Liang X."/>
            <person name="Jin J."/>
            <person name="Gao L."/>
            <person name="Zheng W."/>
            <person name="Hao B."/>
            <person name="Liu S.-M."/>
            <person name="Wang W."/>
            <person name="Yuan L."/>
            <person name="Cao M."/>
            <person name="McDermott J."/>
            <person name="Samudrala R."/>
            <person name="Wang J."/>
            <person name="Wong G.K.-S."/>
            <person name="Yang H."/>
        </authorList>
    </citation>
    <scope>NUCLEOTIDE SEQUENCE [LARGE SCALE GENOMIC DNA]</scope>
    <source>
        <strain>cv. 93-11</strain>
    </source>
</reference>